<feature type="chain" id="PRO_0000200867" description="Uncharacterized protein y4jA/y4nE/y4sE">
    <location>
        <begin position="1"/>
        <end position="504"/>
    </location>
</feature>
<feature type="domain" description="Integrase catalytic" evidence="1">
    <location>
        <begin position="125"/>
        <end position="309"/>
    </location>
</feature>
<feature type="region of interest" description="Disordered" evidence="2">
    <location>
        <begin position="36"/>
        <end position="60"/>
    </location>
</feature>
<protein>
    <recommendedName>
        <fullName>Uncharacterized protein y4jA/y4nE/y4sE</fullName>
    </recommendedName>
</protein>
<geneLocation type="plasmid">
    <name>sym pNGR234a</name>
</geneLocation>
<accession>P55501</accession>
<proteinExistence type="predicted"/>
<reference key="1">
    <citation type="journal article" date="1997" name="Nature">
        <title>Molecular basis of symbiosis between Rhizobium and legumes.</title>
        <authorList>
            <person name="Freiberg C.A."/>
            <person name="Fellay R."/>
            <person name="Bairoch A."/>
            <person name="Broughton W.J."/>
            <person name="Rosenthal A."/>
            <person name="Perret X."/>
        </authorList>
    </citation>
    <scope>NUCLEOTIDE SEQUENCE [LARGE SCALE GENOMIC DNA]</scope>
    <source>
        <strain>NBRC 101917 / NGR234</strain>
    </source>
</reference>
<reference key="2">
    <citation type="journal article" date="2009" name="Appl. Environ. Microbiol.">
        <title>Rhizobium sp. strain NGR234 possesses a remarkable number of secretion systems.</title>
        <authorList>
            <person name="Schmeisser C."/>
            <person name="Liesegang H."/>
            <person name="Krysciak D."/>
            <person name="Bakkou N."/>
            <person name="Le Quere A."/>
            <person name="Wollherr A."/>
            <person name="Heinemeyer I."/>
            <person name="Morgenstern B."/>
            <person name="Pommerening-Roeser A."/>
            <person name="Flores M."/>
            <person name="Palacios R."/>
            <person name="Brenner S."/>
            <person name="Gottschalk G."/>
            <person name="Schmitz R.A."/>
            <person name="Broughton W.J."/>
            <person name="Perret X."/>
            <person name="Strittmatter A.W."/>
            <person name="Streit W.R."/>
        </authorList>
    </citation>
    <scope>NUCLEOTIDE SEQUENCE [LARGE SCALE GENOMIC DNA]</scope>
    <source>
        <strain>NBRC 101917 / NGR234</strain>
    </source>
</reference>
<gene>
    <name type="ordered locus">NGR_a03150</name>
    <name type="ORF">y4jA</name>
</gene>
<gene>
    <name type="ordered locus">NGR_a02370</name>
    <name type="ORF">y4nE</name>
</gene>
<gene>
    <name type="ordered locus">NGR_a01670</name>
    <name type="ORF">y4sE</name>
</gene>
<evidence type="ECO:0000255" key="1">
    <source>
        <dbReference type="PROSITE-ProRule" id="PRU00457"/>
    </source>
</evidence>
<evidence type="ECO:0000256" key="2">
    <source>
        <dbReference type="SAM" id="MobiDB-lite"/>
    </source>
</evidence>
<organism>
    <name type="scientific">Sinorhizobium fredii (strain NBRC 101917 / NGR234)</name>
    <dbReference type="NCBI Taxonomy" id="394"/>
    <lineage>
        <taxon>Bacteria</taxon>
        <taxon>Pseudomonadati</taxon>
        <taxon>Pseudomonadota</taxon>
        <taxon>Alphaproteobacteria</taxon>
        <taxon>Hyphomicrobiales</taxon>
        <taxon>Rhizobiaceae</taxon>
        <taxon>Sinorhizobium/Ensifer group</taxon>
        <taxon>Sinorhizobium</taxon>
    </lineage>
</organism>
<sequence>MPGRHVTDHQMRLFMKYRQTHSVEVAAAKASISRATAFRMEKEQRLPSQNKPPRGRRRPDPLEHIFDAEVVPLLKAAPGIRAVAVYDEMLRRHPELPEGIRRTLERRIRSWRAVHGEAQEVIFRQTHEPGRLGLSDFTDMGSLSVTIAGQPLDHLLYHFRLVWSGFEHAHVILGGESFVALAEGLQNALWSVGGSPLYHRSDSLSAAFRNLDADAKVDLTNRYEELCAHYRMTPTRNNKGVAHENGSIESSHGHLKNAVRDALLMRGTRDFDDLRSYRAFIDEIVSRRNAAHGKRIDAERPHLQVLPERRTTDFEEVVVTVSRTGGFALRKVFYTVPSRLIGHRLRVRLFDDRLDVFIGGTHLLTLPRGRAHASGKHDQVVNYHHVIHSLRKKPMALLNLVYRDKLFPRPEYRRAFDALIEQLPDRQACKITVELLALAHDRGCERELAEELARTLDARKLPDLMALRAIFGPDPDQLPTVHVQLASLNSYEALMGSAYAGEAA</sequence>
<name>Y4JA_SINFN</name>
<keyword id="KW-0614">Plasmid</keyword>
<keyword id="KW-1185">Reference proteome</keyword>
<dbReference type="EMBL" id="U00090">
    <property type="protein sequence ID" value="AAB91713.1"/>
    <property type="molecule type" value="Genomic_DNA"/>
</dbReference>
<dbReference type="EMBL" id="U00090">
    <property type="protein sequence ID" value="AAB91785.1"/>
    <property type="molecule type" value="Genomic_DNA"/>
</dbReference>
<dbReference type="EMBL" id="U00090">
    <property type="protein sequence ID" value="AAB91845.1"/>
    <property type="molecule type" value="Genomic_DNA"/>
</dbReference>
<dbReference type="RefSeq" id="NP_443911.1">
    <property type="nucleotide sequence ID" value="NC_000914.2"/>
</dbReference>
<dbReference type="RefSeq" id="NP_443988.1">
    <property type="nucleotide sequence ID" value="NC_000914.2"/>
</dbReference>
<dbReference type="RefSeq" id="NP_444058.1">
    <property type="nucleotide sequence ID" value="NC_000914.2"/>
</dbReference>
<dbReference type="RefSeq" id="YP_002822762.1">
    <property type="nucleotide sequence ID" value="NC_012586.1"/>
</dbReference>
<dbReference type="RefSeq" id="YP_002823008.1">
    <property type="nucleotide sequence ID" value="NC_012586.1"/>
</dbReference>
<dbReference type="RefSeq" id="YP_002823692.1">
    <property type="nucleotide sequence ID" value="NC_012586.1"/>
</dbReference>
<dbReference type="SMR" id="P55501"/>
<dbReference type="KEGG" id="rhi:NGR_a01670"/>
<dbReference type="KEGG" id="rhi:NGR_a02370"/>
<dbReference type="KEGG" id="rhi:NGR_a03150"/>
<dbReference type="eggNOG" id="COG4584">
    <property type="taxonomic scope" value="Bacteria"/>
</dbReference>
<dbReference type="HOGENOM" id="CLU_034060_1_0_5"/>
<dbReference type="OrthoDB" id="525881at2"/>
<dbReference type="Proteomes" id="UP000001054">
    <property type="component" value="Plasmid pNGR234a"/>
</dbReference>
<dbReference type="GO" id="GO:0015074">
    <property type="term" value="P:DNA integration"/>
    <property type="evidence" value="ECO:0007669"/>
    <property type="project" value="InterPro"/>
</dbReference>
<dbReference type="InterPro" id="IPR001584">
    <property type="entry name" value="Integrase_cat-core"/>
</dbReference>
<dbReference type="InterPro" id="IPR054353">
    <property type="entry name" value="IstA-like_C"/>
</dbReference>
<dbReference type="InterPro" id="IPR012337">
    <property type="entry name" value="RNaseH-like_sf"/>
</dbReference>
<dbReference type="NCBIfam" id="NF033546">
    <property type="entry name" value="transpos_IS21"/>
    <property type="match status" value="1"/>
</dbReference>
<dbReference type="PANTHER" id="PTHR35004:SF7">
    <property type="entry name" value="INTEGRASE PROTEIN"/>
    <property type="match status" value="1"/>
</dbReference>
<dbReference type="PANTHER" id="PTHR35004">
    <property type="entry name" value="TRANSPOSASE RV3428C-RELATED"/>
    <property type="match status" value="1"/>
</dbReference>
<dbReference type="Pfam" id="PF22483">
    <property type="entry name" value="Mu-transpos_C_2"/>
    <property type="match status" value="1"/>
</dbReference>
<dbReference type="SUPFAM" id="SSF53098">
    <property type="entry name" value="Ribonuclease H-like"/>
    <property type="match status" value="1"/>
</dbReference>
<dbReference type="PROSITE" id="PS50994">
    <property type="entry name" value="INTEGRASE"/>
    <property type="match status" value="1"/>
</dbReference>